<evidence type="ECO:0000250" key="1"/>
<evidence type="ECO:0000255" key="2">
    <source>
        <dbReference type="PROSITE-ProRule" id="PRU00169"/>
    </source>
</evidence>
<evidence type="ECO:0000255" key="3">
    <source>
        <dbReference type="PROSITE-ProRule" id="PRU00593"/>
    </source>
</evidence>
<evidence type="ECO:0000305" key="4"/>
<proteinExistence type="inferred from homology"/>
<gene>
    <name type="ordered locus">SE_0165</name>
</gene>
<protein>
    <recommendedName>
        <fullName>Uncharacterized response regulatory protein SE_0165</fullName>
    </recommendedName>
</protein>
<feature type="chain" id="PRO_0000299117" description="Uncharacterized response regulatory protein SE_0165">
    <location>
        <begin position="1"/>
        <end position="251"/>
    </location>
</feature>
<feature type="domain" description="Response regulatory" evidence="2">
    <location>
        <begin position="3"/>
        <end position="118"/>
    </location>
</feature>
<feature type="domain" description="HTH araC/xylS-type" evidence="3">
    <location>
        <begin position="152"/>
        <end position="249"/>
    </location>
</feature>
<feature type="DNA-binding region" description="H-T-H motif" evidence="3">
    <location>
        <begin position="169"/>
        <end position="190"/>
    </location>
</feature>
<feature type="DNA-binding region" description="H-T-H motif" evidence="3">
    <location>
        <begin position="216"/>
        <end position="239"/>
    </location>
</feature>
<feature type="modified residue" description="4-aspartylphosphate" evidence="2">
    <location>
        <position position="55"/>
    </location>
</feature>
<keyword id="KW-0963">Cytoplasm</keyword>
<keyword id="KW-0238">DNA-binding</keyword>
<keyword id="KW-0597">Phosphoprotein</keyword>
<keyword id="KW-0804">Transcription</keyword>
<keyword id="KW-0805">Transcription regulation</keyword>
<keyword id="KW-0902">Two-component regulatory system</keyword>
<organism>
    <name type="scientific">Staphylococcus epidermidis (strain ATCC 12228 / FDA PCI 1200)</name>
    <dbReference type="NCBI Taxonomy" id="176280"/>
    <lineage>
        <taxon>Bacteria</taxon>
        <taxon>Bacillati</taxon>
        <taxon>Bacillota</taxon>
        <taxon>Bacilli</taxon>
        <taxon>Bacillales</taxon>
        <taxon>Staphylococcaceae</taxon>
        <taxon>Staphylococcus</taxon>
    </lineage>
</organism>
<accession>Q8CQE3</accession>
<reference key="1">
    <citation type="journal article" date="2003" name="Mol. Microbiol.">
        <title>Genome-based analysis of virulence genes in a non-biofilm-forming Staphylococcus epidermidis strain (ATCC 12228).</title>
        <authorList>
            <person name="Zhang Y.-Q."/>
            <person name="Ren S.-X."/>
            <person name="Li H.-L."/>
            <person name="Wang Y.-X."/>
            <person name="Fu G."/>
            <person name="Yang J."/>
            <person name="Qin Z.-Q."/>
            <person name="Miao Y.-G."/>
            <person name="Wang W.-Y."/>
            <person name="Chen R.-S."/>
            <person name="Shen Y."/>
            <person name="Chen Z."/>
            <person name="Yuan Z.-H."/>
            <person name="Zhao G.-P."/>
            <person name="Qu D."/>
            <person name="Danchin A."/>
            <person name="Wen Y.-M."/>
        </authorList>
    </citation>
    <scope>NUCLEOTIDE SEQUENCE [LARGE SCALE GENOMIC DNA]</scope>
    <source>
        <strain>ATCC 12228 / FDA PCI 1200</strain>
    </source>
</reference>
<comment type="function">
    <text evidence="1">Probable member of the two-component regulatory system SE_0166/SE_0165.</text>
</comment>
<comment type="subcellular location">
    <subcellularLocation>
        <location evidence="4">Cytoplasm</location>
    </subcellularLocation>
</comment>
<comment type="PTM">
    <text evidence="4">Phosphorylated by SE_0166.</text>
</comment>
<name>Y165_STAES</name>
<dbReference type="EMBL" id="AE015929">
    <property type="protein sequence ID" value="AAO03762.1"/>
    <property type="molecule type" value="Genomic_DNA"/>
</dbReference>
<dbReference type="RefSeq" id="NP_763720.1">
    <property type="nucleotide sequence ID" value="NC_004461.1"/>
</dbReference>
<dbReference type="RefSeq" id="WP_002455962.1">
    <property type="nucleotide sequence ID" value="NZ_WBME01000072.1"/>
</dbReference>
<dbReference type="SMR" id="Q8CQE3"/>
<dbReference type="KEGG" id="sep:SE_0165"/>
<dbReference type="PATRIC" id="fig|176280.10.peg.151"/>
<dbReference type="eggNOG" id="COG2207">
    <property type="taxonomic scope" value="Bacteria"/>
</dbReference>
<dbReference type="eggNOG" id="COG4753">
    <property type="taxonomic scope" value="Bacteria"/>
</dbReference>
<dbReference type="HOGENOM" id="CLU_000445_5_1_9"/>
<dbReference type="OrthoDB" id="9780153at2"/>
<dbReference type="Proteomes" id="UP000001411">
    <property type="component" value="Chromosome"/>
</dbReference>
<dbReference type="GO" id="GO:0005737">
    <property type="term" value="C:cytoplasm"/>
    <property type="evidence" value="ECO:0007669"/>
    <property type="project" value="UniProtKB-SubCell"/>
</dbReference>
<dbReference type="GO" id="GO:0003700">
    <property type="term" value="F:DNA-binding transcription factor activity"/>
    <property type="evidence" value="ECO:0007669"/>
    <property type="project" value="InterPro"/>
</dbReference>
<dbReference type="GO" id="GO:0043565">
    <property type="term" value="F:sequence-specific DNA binding"/>
    <property type="evidence" value="ECO:0007669"/>
    <property type="project" value="InterPro"/>
</dbReference>
<dbReference type="GO" id="GO:0000160">
    <property type="term" value="P:phosphorelay signal transduction system"/>
    <property type="evidence" value="ECO:0007669"/>
    <property type="project" value="UniProtKB-KW"/>
</dbReference>
<dbReference type="CDD" id="cd17536">
    <property type="entry name" value="REC_YesN-like"/>
    <property type="match status" value="1"/>
</dbReference>
<dbReference type="Gene3D" id="3.40.50.2300">
    <property type="match status" value="1"/>
</dbReference>
<dbReference type="Gene3D" id="1.10.10.60">
    <property type="entry name" value="Homeodomain-like"/>
    <property type="match status" value="2"/>
</dbReference>
<dbReference type="InterPro" id="IPR011006">
    <property type="entry name" value="CheY-like_superfamily"/>
</dbReference>
<dbReference type="InterPro" id="IPR009057">
    <property type="entry name" value="Homeodomain-like_sf"/>
</dbReference>
<dbReference type="InterPro" id="IPR051552">
    <property type="entry name" value="HptR"/>
</dbReference>
<dbReference type="InterPro" id="IPR018060">
    <property type="entry name" value="HTH_AraC"/>
</dbReference>
<dbReference type="InterPro" id="IPR001789">
    <property type="entry name" value="Sig_transdc_resp-reg_receiver"/>
</dbReference>
<dbReference type="PANTHER" id="PTHR42713">
    <property type="entry name" value="HISTIDINE KINASE-RELATED"/>
    <property type="match status" value="1"/>
</dbReference>
<dbReference type="PANTHER" id="PTHR42713:SF3">
    <property type="entry name" value="TRANSCRIPTIONAL REGULATORY PROTEIN HPTR"/>
    <property type="match status" value="1"/>
</dbReference>
<dbReference type="Pfam" id="PF12833">
    <property type="entry name" value="HTH_18"/>
    <property type="match status" value="1"/>
</dbReference>
<dbReference type="Pfam" id="PF00072">
    <property type="entry name" value="Response_reg"/>
    <property type="match status" value="1"/>
</dbReference>
<dbReference type="SMART" id="SM00342">
    <property type="entry name" value="HTH_ARAC"/>
    <property type="match status" value="1"/>
</dbReference>
<dbReference type="SMART" id="SM00448">
    <property type="entry name" value="REC"/>
    <property type="match status" value="1"/>
</dbReference>
<dbReference type="SUPFAM" id="SSF52172">
    <property type="entry name" value="CheY-like"/>
    <property type="match status" value="1"/>
</dbReference>
<dbReference type="SUPFAM" id="SSF46689">
    <property type="entry name" value="Homeodomain-like"/>
    <property type="match status" value="1"/>
</dbReference>
<dbReference type="PROSITE" id="PS01124">
    <property type="entry name" value="HTH_ARAC_FAMILY_2"/>
    <property type="match status" value="1"/>
</dbReference>
<dbReference type="PROSITE" id="PS50110">
    <property type="entry name" value="RESPONSE_REGULATORY"/>
    <property type="match status" value="1"/>
</dbReference>
<sequence length="251" mass="29903">MFKVVICDDERIIRQGLKQMIPWKEYHFTTIYTATDGVEALSLIRQHQPELVITDIRMPRKNGVDLLDDIKDLDCQVIILSSYDDFEYMKAGIQHHVLDYLLKPVDHTQLEHILDILVQRLLERPHSTNDDAAYYTAFQPLLKIDYDDYYVNQILSQIKQHYHKKVTVLDLINPIVVSESYAMRTFKEHVGITIVDYLNRYRILKSLHLLDQHYKHYEIAEKVGFSEYKMFCYHFKKYLHMSPSDYNKLSK</sequence>